<name>RS12_HELPG</name>
<proteinExistence type="inferred from homology"/>
<organism>
    <name type="scientific">Helicobacter pylori (strain G27)</name>
    <dbReference type="NCBI Taxonomy" id="563041"/>
    <lineage>
        <taxon>Bacteria</taxon>
        <taxon>Pseudomonadati</taxon>
        <taxon>Campylobacterota</taxon>
        <taxon>Epsilonproteobacteria</taxon>
        <taxon>Campylobacterales</taxon>
        <taxon>Helicobacteraceae</taxon>
        <taxon>Helicobacter</taxon>
    </lineage>
</organism>
<gene>
    <name evidence="2" type="primary">rpsL</name>
    <name type="ordered locus">HPG27_1141</name>
</gene>
<comment type="function">
    <text evidence="2">With S4 and S5 plays an important role in translational accuracy.</text>
</comment>
<comment type="function">
    <text evidence="2">Interacts with and stabilizes bases of the 16S rRNA that are involved in tRNA selection in the A site and with the mRNA backbone. Located at the interface of the 30S and 50S subunits, it traverses the body of the 30S subunit contacting proteins on the other side and probably holding the rRNA structure together. The combined cluster of proteins S8, S12 and S17 appears to hold together the shoulder and platform of the 30S subunit.</text>
</comment>
<comment type="subunit">
    <text evidence="2">Part of the 30S ribosomal subunit. Contacts proteins S8 and S17. May interact with IF1 in the 30S initiation complex.</text>
</comment>
<comment type="similarity">
    <text evidence="2">Belongs to the universal ribosomal protein uS12 family.</text>
</comment>
<sequence>MPTINQLIRKERKKVVKKTKSPALVECPQRRGVCTRVYTTTPKKPNSALRKVAKVRLTSKFEVISYIPGEGHNLQEHSIVLVRGGRVKDLPGVKYHIVRGALDTAGVNKRTVSRSKYGTKKAKATDKKATDNKKK</sequence>
<dbReference type="EMBL" id="CP001173">
    <property type="protein sequence ID" value="ACI27891.1"/>
    <property type="molecule type" value="Genomic_DNA"/>
</dbReference>
<dbReference type="RefSeq" id="WP_001142321.1">
    <property type="nucleotide sequence ID" value="NC_011333.1"/>
</dbReference>
<dbReference type="SMR" id="B5Z8J2"/>
<dbReference type="GeneID" id="93237675"/>
<dbReference type="KEGG" id="hpg:HPG27_1141"/>
<dbReference type="HOGENOM" id="CLU_104295_1_2_7"/>
<dbReference type="Proteomes" id="UP000001735">
    <property type="component" value="Chromosome"/>
</dbReference>
<dbReference type="GO" id="GO:0015935">
    <property type="term" value="C:small ribosomal subunit"/>
    <property type="evidence" value="ECO:0007669"/>
    <property type="project" value="InterPro"/>
</dbReference>
<dbReference type="GO" id="GO:0019843">
    <property type="term" value="F:rRNA binding"/>
    <property type="evidence" value="ECO:0007669"/>
    <property type="project" value="UniProtKB-UniRule"/>
</dbReference>
<dbReference type="GO" id="GO:0003735">
    <property type="term" value="F:structural constituent of ribosome"/>
    <property type="evidence" value="ECO:0007669"/>
    <property type="project" value="InterPro"/>
</dbReference>
<dbReference type="GO" id="GO:0000049">
    <property type="term" value="F:tRNA binding"/>
    <property type="evidence" value="ECO:0007669"/>
    <property type="project" value="UniProtKB-UniRule"/>
</dbReference>
<dbReference type="GO" id="GO:0006412">
    <property type="term" value="P:translation"/>
    <property type="evidence" value="ECO:0007669"/>
    <property type="project" value="UniProtKB-UniRule"/>
</dbReference>
<dbReference type="CDD" id="cd03368">
    <property type="entry name" value="Ribosomal_S12"/>
    <property type="match status" value="1"/>
</dbReference>
<dbReference type="FunFam" id="2.40.50.140:FF:000001">
    <property type="entry name" value="30S ribosomal protein S12"/>
    <property type="match status" value="1"/>
</dbReference>
<dbReference type="Gene3D" id="2.40.50.140">
    <property type="entry name" value="Nucleic acid-binding proteins"/>
    <property type="match status" value="1"/>
</dbReference>
<dbReference type="HAMAP" id="MF_00403_B">
    <property type="entry name" value="Ribosomal_uS12_B"/>
    <property type="match status" value="1"/>
</dbReference>
<dbReference type="InterPro" id="IPR012340">
    <property type="entry name" value="NA-bd_OB-fold"/>
</dbReference>
<dbReference type="InterPro" id="IPR006032">
    <property type="entry name" value="Ribosomal_uS12"/>
</dbReference>
<dbReference type="InterPro" id="IPR005679">
    <property type="entry name" value="Ribosomal_uS12_bac"/>
</dbReference>
<dbReference type="NCBIfam" id="TIGR00981">
    <property type="entry name" value="rpsL_bact"/>
    <property type="match status" value="1"/>
</dbReference>
<dbReference type="PANTHER" id="PTHR11652">
    <property type="entry name" value="30S RIBOSOMAL PROTEIN S12 FAMILY MEMBER"/>
    <property type="match status" value="1"/>
</dbReference>
<dbReference type="Pfam" id="PF00164">
    <property type="entry name" value="Ribosom_S12_S23"/>
    <property type="match status" value="1"/>
</dbReference>
<dbReference type="PIRSF" id="PIRSF002133">
    <property type="entry name" value="Ribosomal_S12/S23"/>
    <property type="match status" value="1"/>
</dbReference>
<dbReference type="PRINTS" id="PR01034">
    <property type="entry name" value="RIBOSOMALS12"/>
</dbReference>
<dbReference type="SUPFAM" id="SSF50249">
    <property type="entry name" value="Nucleic acid-binding proteins"/>
    <property type="match status" value="1"/>
</dbReference>
<dbReference type="PROSITE" id="PS00055">
    <property type="entry name" value="RIBOSOMAL_S12"/>
    <property type="match status" value="1"/>
</dbReference>
<evidence type="ECO:0000250" key="1"/>
<evidence type="ECO:0000255" key="2">
    <source>
        <dbReference type="HAMAP-Rule" id="MF_00403"/>
    </source>
</evidence>
<evidence type="ECO:0000256" key="3">
    <source>
        <dbReference type="SAM" id="MobiDB-lite"/>
    </source>
</evidence>
<evidence type="ECO:0000305" key="4"/>
<reference key="1">
    <citation type="journal article" date="2009" name="J. Bacteriol.">
        <title>The complete genome sequence of Helicobacter pylori strain G27.</title>
        <authorList>
            <person name="Baltrus D.A."/>
            <person name="Amieva M.R."/>
            <person name="Covacci A."/>
            <person name="Lowe T.M."/>
            <person name="Merrell D.S."/>
            <person name="Ottemann K.M."/>
            <person name="Stein M."/>
            <person name="Salama N.R."/>
            <person name="Guillemin K."/>
        </authorList>
    </citation>
    <scope>NUCLEOTIDE SEQUENCE [LARGE SCALE GENOMIC DNA]</scope>
    <source>
        <strain>G27</strain>
    </source>
</reference>
<accession>B5Z8J2</accession>
<protein>
    <recommendedName>
        <fullName evidence="2">Small ribosomal subunit protein uS12</fullName>
    </recommendedName>
    <alternativeName>
        <fullName evidence="4">30S ribosomal protein S12</fullName>
    </alternativeName>
</protein>
<feature type="chain" id="PRO_1000194175" description="Small ribosomal subunit protein uS12">
    <location>
        <begin position="1"/>
        <end position="135"/>
    </location>
</feature>
<feature type="region of interest" description="Disordered" evidence="3">
    <location>
        <begin position="108"/>
        <end position="135"/>
    </location>
</feature>
<feature type="compositionally biased region" description="Basic residues" evidence="3">
    <location>
        <begin position="111"/>
        <end position="122"/>
    </location>
</feature>
<feature type="compositionally biased region" description="Basic and acidic residues" evidence="3">
    <location>
        <begin position="123"/>
        <end position="135"/>
    </location>
</feature>
<feature type="modified residue" description="3-methylthioaspartic acid" evidence="1">
    <location>
        <position position="89"/>
    </location>
</feature>
<keyword id="KW-0488">Methylation</keyword>
<keyword id="KW-1185">Reference proteome</keyword>
<keyword id="KW-0687">Ribonucleoprotein</keyword>
<keyword id="KW-0689">Ribosomal protein</keyword>
<keyword id="KW-0694">RNA-binding</keyword>
<keyword id="KW-0699">rRNA-binding</keyword>
<keyword id="KW-0820">tRNA-binding</keyword>